<gene>
    <name type="primary">copA</name>
    <name type="ordered locus">MW2478</name>
</gene>
<proteinExistence type="inferred from homology"/>
<feature type="chain" id="PRO_0000350591" description="Copper-exporting P-type ATPase">
    <location>
        <begin position="1"/>
        <end position="802"/>
    </location>
</feature>
<feature type="transmembrane region" description="Helical" evidence="2">
    <location>
        <begin position="161"/>
        <end position="181"/>
    </location>
</feature>
<feature type="transmembrane region" description="Helical" evidence="2">
    <location>
        <begin position="192"/>
        <end position="212"/>
    </location>
</feature>
<feature type="transmembrane region" description="Helical" evidence="2">
    <location>
        <begin position="224"/>
        <end position="244"/>
    </location>
</feature>
<feature type="transmembrane region" description="Helical" evidence="2">
    <location>
        <begin position="256"/>
        <end position="276"/>
    </location>
</feature>
<feature type="transmembrane region" description="Helical" evidence="2">
    <location>
        <begin position="411"/>
        <end position="431"/>
    </location>
</feature>
<feature type="transmembrane region" description="Helical" evidence="2">
    <location>
        <begin position="438"/>
        <end position="458"/>
    </location>
</feature>
<feature type="transmembrane region" description="Helical" evidence="2">
    <location>
        <begin position="748"/>
        <end position="767"/>
    </location>
</feature>
<feature type="transmembrane region" description="Helical" evidence="2">
    <location>
        <begin position="771"/>
        <end position="790"/>
    </location>
</feature>
<feature type="domain" description="HMA 1" evidence="3">
    <location>
        <begin position="5"/>
        <end position="70"/>
    </location>
</feature>
<feature type="domain" description="HMA 2" evidence="3">
    <location>
        <begin position="72"/>
        <end position="138"/>
    </location>
</feature>
<feature type="active site" description="4-aspartylphosphate intermediate" evidence="1">
    <location>
        <position position="495"/>
    </location>
</feature>
<feature type="binding site" evidence="3">
    <location>
        <position position="16"/>
    </location>
    <ligand>
        <name>Cu(+)</name>
        <dbReference type="ChEBI" id="CHEBI:49552"/>
        <label>1</label>
    </ligand>
</feature>
<feature type="binding site" evidence="3">
    <location>
        <position position="19"/>
    </location>
    <ligand>
        <name>Cu(+)</name>
        <dbReference type="ChEBI" id="CHEBI:49552"/>
        <label>1</label>
    </ligand>
</feature>
<feature type="binding site" evidence="3">
    <location>
        <position position="83"/>
    </location>
    <ligand>
        <name>Cu(+)</name>
        <dbReference type="ChEBI" id="CHEBI:49552"/>
        <label>2</label>
    </ligand>
</feature>
<feature type="binding site" evidence="3">
    <location>
        <position position="86"/>
    </location>
    <ligand>
        <name>Cu(+)</name>
        <dbReference type="ChEBI" id="CHEBI:49552"/>
        <label>2</label>
    </ligand>
</feature>
<feature type="binding site">
    <location>
        <position position="690"/>
    </location>
    <ligand>
        <name>Mg(2+)</name>
        <dbReference type="ChEBI" id="CHEBI:18420"/>
    </ligand>
</feature>
<feature type="binding site">
    <location>
        <position position="694"/>
    </location>
    <ligand>
        <name>Mg(2+)</name>
        <dbReference type="ChEBI" id="CHEBI:18420"/>
    </ligand>
</feature>
<keyword id="KW-0067">ATP-binding</keyword>
<keyword id="KW-1003">Cell membrane</keyword>
<keyword id="KW-0186">Copper</keyword>
<keyword id="KW-0187">Copper transport</keyword>
<keyword id="KW-0406">Ion transport</keyword>
<keyword id="KW-0460">Magnesium</keyword>
<keyword id="KW-0472">Membrane</keyword>
<keyword id="KW-0479">Metal-binding</keyword>
<keyword id="KW-0547">Nucleotide-binding</keyword>
<keyword id="KW-0597">Phosphoprotein</keyword>
<keyword id="KW-0677">Repeat</keyword>
<keyword id="KW-1278">Translocase</keyword>
<keyword id="KW-0812">Transmembrane</keyword>
<keyword id="KW-1133">Transmembrane helix</keyword>
<keyword id="KW-0813">Transport</keyword>
<sequence length="802" mass="86758">MANTKKTTLDITGMTCAACSNRIEKKLNKLDDVNAQVNLTTEKATVEYNPDQHDVQEFINTIQHLGYGVAVETVELDITGMTCAACSSRIEKVLNKMDGVQNATVNLTTEQAKVDYYPEETDADKLVTRIQKLGYDASIKDNNKDQTSRKAEALQHKLIKLIISAVLSLPLLMLMFVHLFNMHIPALFTNPWFQFILATPVQFIIGWQFYVGAYKNLRNGGANMDVLVAVGTSAAYFYSIYEMVRWLNGSTTQPHLYFETSAVLITLILFGKYLEARAKSQTTNALGELLSLQAKEARILKDGNEVMIPLNEVHVGDTLIVKPGEKIPVDGKIIKGMTAIDESMLTGESIPVEKNVDDTVIGSTMNKNGTITMTATKVGGDTALANIIKVVEEAQSSKAPIQRLADIISGYFVPIVVGIALLTFIVWITLVTPGTFEPALVASISVLVIACPCALGLATPTSIMVGTGRAAENGILFKGGEFVERTHQIDTIVLDKTGTITNGRPVVTDYHGDNQTLQLLATAEKDSEHPLAEAIVNYAKEKQLTLTETTTFKAVPGHGIEATIDHHHILVGNRKLMADNDISLPKHISDDLTYYERDGKTAMLIAVNYSLTGIIAVADTVKDHAKDAIKQLHDMGIEVAMLTGDNKNTAQAIAKQVGIDTVIADILPEEKAAQIAKLQQQGKKVAMVGDGVNDAPALVKADIGIAIGTGTEVAIEAADITILGGDLMLIPKAIYASKATIRNIRQNLFWAFGYNIAGIPIAALGLLAPWVAGAAMALSSVSVVTNALRLKKMRLEPRRKDA</sequence>
<dbReference type="EC" id="7.2.2.8"/>
<dbReference type="EMBL" id="BA000033">
    <property type="protein sequence ID" value="BAB96343.1"/>
    <property type="molecule type" value="Genomic_DNA"/>
</dbReference>
<dbReference type="RefSeq" id="WP_000024129.1">
    <property type="nucleotide sequence ID" value="NC_003923.1"/>
</dbReference>
<dbReference type="SMR" id="Q8NUQ9"/>
<dbReference type="KEGG" id="sam:MW2478"/>
<dbReference type="HOGENOM" id="CLU_001771_0_3_9"/>
<dbReference type="GO" id="GO:0005886">
    <property type="term" value="C:plasma membrane"/>
    <property type="evidence" value="ECO:0007669"/>
    <property type="project" value="UniProtKB-SubCell"/>
</dbReference>
<dbReference type="GO" id="GO:0005524">
    <property type="term" value="F:ATP binding"/>
    <property type="evidence" value="ECO:0007669"/>
    <property type="project" value="UniProtKB-KW"/>
</dbReference>
<dbReference type="GO" id="GO:0016887">
    <property type="term" value="F:ATP hydrolysis activity"/>
    <property type="evidence" value="ECO:0007669"/>
    <property type="project" value="InterPro"/>
</dbReference>
<dbReference type="GO" id="GO:0005507">
    <property type="term" value="F:copper ion binding"/>
    <property type="evidence" value="ECO:0007669"/>
    <property type="project" value="InterPro"/>
</dbReference>
<dbReference type="GO" id="GO:0043682">
    <property type="term" value="F:P-type divalent copper transporter activity"/>
    <property type="evidence" value="ECO:0007669"/>
    <property type="project" value="TreeGrafter"/>
</dbReference>
<dbReference type="GO" id="GO:0140581">
    <property type="term" value="F:P-type monovalent copper transporter activity"/>
    <property type="evidence" value="ECO:0007669"/>
    <property type="project" value="UniProtKB-EC"/>
</dbReference>
<dbReference type="GO" id="GO:0055070">
    <property type="term" value="P:copper ion homeostasis"/>
    <property type="evidence" value="ECO:0007669"/>
    <property type="project" value="TreeGrafter"/>
</dbReference>
<dbReference type="CDD" id="cd00371">
    <property type="entry name" value="HMA"/>
    <property type="match status" value="2"/>
</dbReference>
<dbReference type="CDD" id="cd02094">
    <property type="entry name" value="P-type_ATPase_Cu-like"/>
    <property type="match status" value="1"/>
</dbReference>
<dbReference type="FunFam" id="3.40.1110.10:FF:000038">
    <property type="entry name" value="Copper-exporting P-type ATPase"/>
    <property type="match status" value="1"/>
</dbReference>
<dbReference type="FunFam" id="3.40.1110.10:FF:000049">
    <property type="entry name" value="Copper-exporting P-type ATPase"/>
    <property type="match status" value="1"/>
</dbReference>
<dbReference type="FunFam" id="2.70.150.10:FF:000020">
    <property type="entry name" value="Copper-exporting P-type ATPase A"/>
    <property type="match status" value="1"/>
</dbReference>
<dbReference type="FunFam" id="3.30.70.100:FF:000005">
    <property type="entry name" value="Copper-exporting P-type ATPase A"/>
    <property type="match status" value="2"/>
</dbReference>
<dbReference type="FunFam" id="3.40.50.1000:FF:000144">
    <property type="entry name" value="copper-transporting ATPase 1 isoform X2"/>
    <property type="match status" value="1"/>
</dbReference>
<dbReference type="Gene3D" id="3.30.70.100">
    <property type="match status" value="2"/>
</dbReference>
<dbReference type="Gene3D" id="3.40.1110.10">
    <property type="entry name" value="Calcium-transporting ATPase, cytoplasmic domain N"/>
    <property type="match status" value="2"/>
</dbReference>
<dbReference type="Gene3D" id="2.70.150.10">
    <property type="entry name" value="Calcium-transporting ATPase, cytoplasmic transduction domain A"/>
    <property type="match status" value="1"/>
</dbReference>
<dbReference type="Gene3D" id="3.40.50.1000">
    <property type="entry name" value="HAD superfamily/HAD-like"/>
    <property type="match status" value="1"/>
</dbReference>
<dbReference type="InterPro" id="IPR023299">
    <property type="entry name" value="ATPase_P-typ_cyto_dom_N"/>
</dbReference>
<dbReference type="InterPro" id="IPR018303">
    <property type="entry name" value="ATPase_P-typ_P_site"/>
</dbReference>
<dbReference type="InterPro" id="IPR023298">
    <property type="entry name" value="ATPase_P-typ_TM_dom_sf"/>
</dbReference>
<dbReference type="InterPro" id="IPR008250">
    <property type="entry name" value="ATPase_P-typ_transduc_dom_A_sf"/>
</dbReference>
<dbReference type="InterPro" id="IPR036412">
    <property type="entry name" value="HAD-like_sf"/>
</dbReference>
<dbReference type="InterPro" id="IPR023214">
    <property type="entry name" value="HAD_sf"/>
</dbReference>
<dbReference type="InterPro" id="IPR017969">
    <property type="entry name" value="Heavy-metal-associated_CS"/>
</dbReference>
<dbReference type="InterPro" id="IPR006122">
    <property type="entry name" value="HMA_Cu_ion-bd"/>
</dbReference>
<dbReference type="InterPro" id="IPR006121">
    <property type="entry name" value="HMA_dom"/>
</dbReference>
<dbReference type="InterPro" id="IPR036163">
    <property type="entry name" value="HMA_dom_sf"/>
</dbReference>
<dbReference type="InterPro" id="IPR027256">
    <property type="entry name" value="P-typ_ATPase_IB"/>
</dbReference>
<dbReference type="InterPro" id="IPR001757">
    <property type="entry name" value="P_typ_ATPase"/>
</dbReference>
<dbReference type="InterPro" id="IPR044492">
    <property type="entry name" value="P_typ_ATPase_HD_dom"/>
</dbReference>
<dbReference type="NCBIfam" id="TIGR01511">
    <property type="entry name" value="ATPase-IB1_Cu"/>
    <property type="match status" value="1"/>
</dbReference>
<dbReference type="NCBIfam" id="TIGR01525">
    <property type="entry name" value="ATPase-IB_hvy"/>
    <property type="match status" value="1"/>
</dbReference>
<dbReference type="NCBIfam" id="TIGR01494">
    <property type="entry name" value="ATPase_P-type"/>
    <property type="match status" value="1"/>
</dbReference>
<dbReference type="NCBIfam" id="TIGR00003">
    <property type="entry name" value="copper ion binding protein"/>
    <property type="match status" value="2"/>
</dbReference>
<dbReference type="PANTHER" id="PTHR43520">
    <property type="entry name" value="ATP7, ISOFORM B"/>
    <property type="match status" value="1"/>
</dbReference>
<dbReference type="PANTHER" id="PTHR43520:SF8">
    <property type="entry name" value="P-TYPE CU(+) TRANSPORTER"/>
    <property type="match status" value="1"/>
</dbReference>
<dbReference type="Pfam" id="PF00122">
    <property type="entry name" value="E1-E2_ATPase"/>
    <property type="match status" value="1"/>
</dbReference>
<dbReference type="Pfam" id="PF00403">
    <property type="entry name" value="HMA"/>
    <property type="match status" value="2"/>
</dbReference>
<dbReference type="Pfam" id="PF00702">
    <property type="entry name" value="Hydrolase"/>
    <property type="match status" value="1"/>
</dbReference>
<dbReference type="PRINTS" id="PR00119">
    <property type="entry name" value="CATATPASE"/>
</dbReference>
<dbReference type="PRINTS" id="PR00943">
    <property type="entry name" value="CUATPASE"/>
</dbReference>
<dbReference type="SFLD" id="SFLDS00003">
    <property type="entry name" value="Haloacid_Dehalogenase"/>
    <property type="match status" value="1"/>
</dbReference>
<dbReference type="SFLD" id="SFLDF00027">
    <property type="entry name" value="p-type_atpase"/>
    <property type="match status" value="1"/>
</dbReference>
<dbReference type="SUPFAM" id="SSF81653">
    <property type="entry name" value="Calcium ATPase, transduction domain A"/>
    <property type="match status" value="1"/>
</dbReference>
<dbReference type="SUPFAM" id="SSF81665">
    <property type="entry name" value="Calcium ATPase, transmembrane domain M"/>
    <property type="match status" value="1"/>
</dbReference>
<dbReference type="SUPFAM" id="SSF56784">
    <property type="entry name" value="HAD-like"/>
    <property type="match status" value="1"/>
</dbReference>
<dbReference type="SUPFAM" id="SSF55008">
    <property type="entry name" value="HMA, heavy metal-associated domain"/>
    <property type="match status" value="2"/>
</dbReference>
<dbReference type="PROSITE" id="PS00154">
    <property type="entry name" value="ATPASE_E1_E2"/>
    <property type="match status" value="1"/>
</dbReference>
<dbReference type="PROSITE" id="PS01047">
    <property type="entry name" value="HMA_1"/>
    <property type="match status" value="2"/>
</dbReference>
<dbReference type="PROSITE" id="PS50846">
    <property type="entry name" value="HMA_2"/>
    <property type="match status" value="2"/>
</dbReference>
<comment type="function">
    <text evidence="1">Involved in copper export.</text>
</comment>
<comment type="catalytic activity">
    <reaction>
        <text>Cu(+)(in) + ATP + H2O = Cu(+)(out) + ADP + phosphate + H(+)</text>
        <dbReference type="Rhea" id="RHEA:25792"/>
        <dbReference type="ChEBI" id="CHEBI:15377"/>
        <dbReference type="ChEBI" id="CHEBI:15378"/>
        <dbReference type="ChEBI" id="CHEBI:30616"/>
        <dbReference type="ChEBI" id="CHEBI:43474"/>
        <dbReference type="ChEBI" id="CHEBI:49552"/>
        <dbReference type="ChEBI" id="CHEBI:456216"/>
        <dbReference type="EC" id="7.2.2.8"/>
    </reaction>
</comment>
<comment type="subcellular location">
    <subcellularLocation>
        <location evidence="1">Cell membrane</location>
        <topology evidence="1">Multi-pass membrane protein</topology>
    </subcellularLocation>
</comment>
<comment type="similarity">
    <text evidence="4">Belongs to the cation transport ATPase (P-type) (TC 3.A.3) family. Type IB subfamily.</text>
</comment>
<name>COPA_STAAW</name>
<accession>Q8NUQ9</accession>
<organism>
    <name type="scientific">Staphylococcus aureus (strain MW2)</name>
    <dbReference type="NCBI Taxonomy" id="196620"/>
    <lineage>
        <taxon>Bacteria</taxon>
        <taxon>Bacillati</taxon>
        <taxon>Bacillota</taxon>
        <taxon>Bacilli</taxon>
        <taxon>Bacillales</taxon>
        <taxon>Staphylococcaceae</taxon>
        <taxon>Staphylococcus</taxon>
    </lineage>
</organism>
<protein>
    <recommendedName>
        <fullName>Copper-exporting P-type ATPase</fullName>
        <ecNumber>7.2.2.8</ecNumber>
    </recommendedName>
    <alternativeName>
        <fullName>Copper-exporting P-type ATPase A</fullName>
    </alternativeName>
    <alternativeName>
        <fullName>Cu(+)-exporting ATPase</fullName>
    </alternativeName>
</protein>
<reference key="1">
    <citation type="journal article" date="2002" name="Lancet">
        <title>Genome and virulence determinants of high virulence community-acquired MRSA.</title>
        <authorList>
            <person name="Baba T."/>
            <person name="Takeuchi F."/>
            <person name="Kuroda M."/>
            <person name="Yuzawa H."/>
            <person name="Aoki K."/>
            <person name="Oguchi A."/>
            <person name="Nagai Y."/>
            <person name="Iwama N."/>
            <person name="Asano K."/>
            <person name="Naimi T."/>
            <person name="Kuroda H."/>
            <person name="Cui L."/>
            <person name="Yamamoto K."/>
            <person name="Hiramatsu K."/>
        </authorList>
    </citation>
    <scope>NUCLEOTIDE SEQUENCE [LARGE SCALE GENOMIC DNA]</scope>
    <source>
        <strain>MW2</strain>
    </source>
</reference>
<evidence type="ECO:0000250" key="1"/>
<evidence type="ECO:0000255" key="2"/>
<evidence type="ECO:0000255" key="3">
    <source>
        <dbReference type="PROSITE-ProRule" id="PRU00280"/>
    </source>
</evidence>
<evidence type="ECO:0000305" key="4"/>